<accession>P59146</accession>
<sequence>MSRYRGPRVRIIRRLGTLPGLTNKIPQLKSSSINQSTSNKKISQYRIRLEEKQKLRFHYGITERQLLNYVRIARKAKGSTGEVLLQLLEMRLDNIIFRLGMAPTIPGARQLVNHRHILVNDCIVNIPSYRCKPQDFITIKNQRKSEAIISKNIEFYQNSKIPNHLTYSSLEKKGLVNQILDRESIGLKINELLVVEYYSRQA</sequence>
<proteinExistence type="inferred from homology"/>
<comment type="function">
    <text evidence="1">One of the primary rRNA binding proteins, it binds directly to 16S rRNA where it nucleates assembly of the body of the 30S subunit.</text>
</comment>
<comment type="function">
    <text evidence="1">With S5 and S12 plays an important role in translational accuracy.</text>
</comment>
<comment type="subunit">
    <text evidence="1">Part of the 30S ribosomal subunit. Contacts protein S5. The interaction surface between S4 and S5 is involved in control of translational fidelity (By similarity).</text>
</comment>
<comment type="subcellular location">
    <subcellularLocation>
        <location>Plastid</location>
        <location>Chloroplast</location>
    </subcellularLocation>
</comment>
<comment type="similarity">
    <text evidence="2">Belongs to the universal ribosomal protein uS4 family.</text>
</comment>
<name>RR4_LEUSC</name>
<geneLocation type="chloroplast"/>
<reference key="1">
    <citation type="journal article" date="2002" name="Cryptogam. Bryol.">
        <title>The systematic position of the Hypoptergiaceae (Bryopsida) inferred from rps4 gene sequences.</title>
        <authorList>
            <person name="Bloecher R."/>
            <person name="Capesius I."/>
        </authorList>
    </citation>
    <scope>NUCLEOTIDE SEQUENCE [GENOMIC DNA]</scope>
    <source>
        <tissue>Gametophyte</tissue>
    </source>
</reference>
<dbReference type="EMBL" id="AJ269688">
    <property type="protein sequence ID" value="CAC80644.1"/>
    <property type="molecule type" value="Genomic_DNA"/>
</dbReference>
<dbReference type="SMR" id="P59146"/>
<dbReference type="GO" id="GO:0009507">
    <property type="term" value="C:chloroplast"/>
    <property type="evidence" value="ECO:0007669"/>
    <property type="project" value="UniProtKB-SubCell"/>
</dbReference>
<dbReference type="GO" id="GO:0015935">
    <property type="term" value="C:small ribosomal subunit"/>
    <property type="evidence" value="ECO:0007669"/>
    <property type="project" value="InterPro"/>
</dbReference>
<dbReference type="GO" id="GO:0019843">
    <property type="term" value="F:rRNA binding"/>
    <property type="evidence" value="ECO:0007669"/>
    <property type="project" value="UniProtKB-UniRule"/>
</dbReference>
<dbReference type="GO" id="GO:0003735">
    <property type="term" value="F:structural constituent of ribosome"/>
    <property type="evidence" value="ECO:0007669"/>
    <property type="project" value="InterPro"/>
</dbReference>
<dbReference type="GO" id="GO:0042274">
    <property type="term" value="P:ribosomal small subunit biogenesis"/>
    <property type="evidence" value="ECO:0007669"/>
    <property type="project" value="TreeGrafter"/>
</dbReference>
<dbReference type="GO" id="GO:0006412">
    <property type="term" value="P:translation"/>
    <property type="evidence" value="ECO:0007669"/>
    <property type="project" value="UniProtKB-UniRule"/>
</dbReference>
<dbReference type="CDD" id="cd00165">
    <property type="entry name" value="S4"/>
    <property type="match status" value="1"/>
</dbReference>
<dbReference type="FunFam" id="1.10.1050.10:FF:000002">
    <property type="entry name" value="30S ribosomal protein S4, chloroplastic"/>
    <property type="match status" value="1"/>
</dbReference>
<dbReference type="FunFam" id="3.10.290.10:FF:000081">
    <property type="entry name" value="30S ribosomal protein S4, chloroplastic"/>
    <property type="match status" value="1"/>
</dbReference>
<dbReference type="Gene3D" id="1.10.1050.10">
    <property type="entry name" value="Ribosomal Protein S4 Delta 41, Chain A, domain 1"/>
    <property type="match status" value="1"/>
</dbReference>
<dbReference type="Gene3D" id="3.10.290.10">
    <property type="entry name" value="RNA-binding S4 domain"/>
    <property type="match status" value="1"/>
</dbReference>
<dbReference type="HAMAP" id="MF_01306_B">
    <property type="entry name" value="Ribosomal_uS4_B"/>
    <property type="match status" value="1"/>
</dbReference>
<dbReference type="InterPro" id="IPR022801">
    <property type="entry name" value="Ribosomal_uS4"/>
</dbReference>
<dbReference type="InterPro" id="IPR005709">
    <property type="entry name" value="Ribosomal_uS4_bac-type"/>
</dbReference>
<dbReference type="InterPro" id="IPR018079">
    <property type="entry name" value="Ribosomal_uS4_CS"/>
</dbReference>
<dbReference type="InterPro" id="IPR001912">
    <property type="entry name" value="Ribosomal_uS4_N"/>
</dbReference>
<dbReference type="InterPro" id="IPR002942">
    <property type="entry name" value="S4_RNA-bd"/>
</dbReference>
<dbReference type="InterPro" id="IPR036986">
    <property type="entry name" value="S4_RNA-bd_sf"/>
</dbReference>
<dbReference type="NCBIfam" id="NF003717">
    <property type="entry name" value="PRK05327.1"/>
    <property type="match status" value="1"/>
</dbReference>
<dbReference type="NCBIfam" id="TIGR01017">
    <property type="entry name" value="rpsD_bact"/>
    <property type="match status" value="1"/>
</dbReference>
<dbReference type="PANTHER" id="PTHR11831">
    <property type="entry name" value="30S 40S RIBOSOMAL PROTEIN"/>
    <property type="match status" value="1"/>
</dbReference>
<dbReference type="PANTHER" id="PTHR11831:SF4">
    <property type="entry name" value="SMALL RIBOSOMAL SUBUNIT PROTEIN US4M"/>
    <property type="match status" value="1"/>
</dbReference>
<dbReference type="Pfam" id="PF00163">
    <property type="entry name" value="Ribosomal_S4"/>
    <property type="match status" value="1"/>
</dbReference>
<dbReference type="Pfam" id="PF01479">
    <property type="entry name" value="S4"/>
    <property type="match status" value="1"/>
</dbReference>
<dbReference type="SMART" id="SM01390">
    <property type="entry name" value="Ribosomal_S4"/>
    <property type="match status" value="1"/>
</dbReference>
<dbReference type="SMART" id="SM00363">
    <property type="entry name" value="S4"/>
    <property type="match status" value="1"/>
</dbReference>
<dbReference type="SUPFAM" id="SSF55174">
    <property type="entry name" value="Alpha-L RNA-binding motif"/>
    <property type="match status" value="1"/>
</dbReference>
<dbReference type="PROSITE" id="PS00632">
    <property type="entry name" value="RIBOSOMAL_S4"/>
    <property type="match status" value="1"/>
</dbReference>
<dbReference type="PROSITE" id="PS50889">
    <property type="entry name" value="S4"/>
    <property type="match status" value="1"/>
</dbReference>
<organism>
    <name type="scientific">Leucodon sciuroides</name>
    <name type="common">Moss</name>
    <dbReference type="NCBI Taxonomy" id="69533"/>
    <lineage>
        <taxon>Eukaryota</taxon>
        <taxon>Viridiplantae</taxon>
        <taxon>Streptophyta</taxon>
        <taxon>Embryophyta</taxon>
        <taxon>Bryophyta</taxon>
        <taxon>Bryophytina</taxon>
        <taxon>Bryopsida</taxon>
        <taxon>Bryidae</taxon>
        <taxon>Hypnanae</taxon>
        <taxon>Hypnales</taxon>
        <taxon>Leucodontaceae</taxon>
        <taxon>Leucodon</taxon>
    </lineage>
</organism>
<keyword id="KW-0150">Chloroplast</keyword>
<keyword id="KW-0934">Plastid</keyword>
<keyword id="KW-0687">Ribonucleoprotein</keyword>
<keyword id="KW-0689">Ribosomal protein</keyword>
<keyword id="KW-0694">RNA-binding</keyword>
<keyword id="KW-0699">rRNA-binding</keyword>
<evidence type="ECO:0000250" key="1"/>
<evidence type="ECO:0000305" key="2"/>
<gene>
    <name type="primary">rps4</name>
</gene>
<protein>
    <recommendedName>
        <fullName evidence="2">Small ribosomal subunit protein uS4c</fullName>
    </recommendedName>
    <alternativeName>
        <fullName>30S ribosomal protein S4, chloroplastic</fullName>
    </alternativeName>
</protein>
<feature type="chain" id="PRO_0000132617" description="Small ribosomal subunit protein uS4c">
    <location>
        <begin position="1"/>
        <end position="202"/>
    </location>
</feature>
<feature type="domain" description="S4 RNA-binding">
    <location>
        <begin position="90"/>
        <end position="153"/>
    </location>
</feature>